<accession>B0U172</accession>
<feature type="chain" id="PRO_1000077787" description="UvrABC system protein C">
    <location>
        <begin position="1"/>
        <end position="612"/>
    </location>
</feature>
<feature type="domain" description="GIY-YIG" evidence="1">
    <location>
        <begin position="20"/>
        <end position="98"/>
    </location>
</feature>
<feature type="domain" description="UVR" evidence="1">
    <location>
        <begin position="208"/>
        <end position="243"/>
    </location>
</feature>
<comment type="function">
    <text evidence="1">The UvrABC repair system catalyzes the recognition and processing of DNA lesions. UvrC both incises the 5' and 3' sides of the lesion. The N-terminal half is responsible for the 3' incision and the C-terminal half is responsible for the 5' incision.</text>
</comment>
<comment type="subunit">
    <text evidence="1">Interacts with UvrB in an incision complex.</text>
</comment>
<comment type="subcellular location">
    <subcellularLocation>
        <location evidence="1">Cytoplasm</location>
    </subcellularLocation>
</comment>
<comment type="similarity">
    <text evidence="1">Belongs to the UvrC family.</text>
</comment>
<name>UVRC_FRAP2</name>
<reference key="1">
    <citation type="submission" date="2007-12" db="EMBL/GenBank/DDBJ databases">
        <title>Complete sequence of chromosome of Francisella philomiragia subsp. philomiragia ATCC 25017.</title>
        <authorList>
            <consortium name="US DOE Joint Genome Institute"/>
            <person name="Copeland A."/>
            <person name="Lucas S."/>
            <person name="Lapidus A."/>
            <person name="Barry K."/>
            <person name="Detter J.C."/>
            <person name="Glavina del Rio T."/>
            <person name="Hammon N."/>
            <person name="Israni S."/>
            <person name="Dalin E."/>
            <person name="Tice H."/>
            <person name="Pitluck S."/>
            <person name="Chain P."/>
            <person name="Malfatti S."/>
            <person name="Shin M."/>
            <person name="Vergez L."/>
            <person name="Schmutz J."/>
            <person name="Larimer F."/>
            <person name="Land M."/>
            <person name="Hauser L."/>
            <person name="Richardson P."/>
        </authorList>
    </citation>
    <scope>NUCLEOTIDE SEQUENCE [LARGE SCALE GENOMIC DNA]</scope>
    <source>
        <strain>ATCC 25017 / CCUG 19701 / FSC 153 / O#319-036</strain>
    </source>
</reference>
<sequence>MIADNSKDFDLKSFLANLTTHSGVYRMLDKHGEIIYVGKAKNLKNRVNSYFSKGAKDSKTLMMVEQVARIEITIAPSDYEAYLLENNLIKQHRPKYNILFKDDKSYPYLVISRDKFPRVSFYRGKSAYKKGQCFGPYVSISSVKNTLNIIQKIFPIRQCENSYYKSRVRPCLQYQIKRCLAPCVGLVSQEQYDEQLAILKKFLAGKFSSVLEEISAKMYQASEDMEYEKAQVYRDQLVILRKLQQQQIVDIQEDKTFDVIGIYMQDSYASIALLQIQNGDVVADRHWSIDAKGQDKTSIMHAFLSHFYLGDEIRNIWPKNIILSKVEFADITDLMNSISQKIGQAINWIVAPAADNLKWLKLAEVNARQKLNIYTSSKSQYQKRLESLKEFLELEKDIKRIECFDISHFQGEATIASCVVYTDEGEDRKSHRRYNIKDIKAGDDYAAIHQAVSRRVSSGLEADNLPDVMIIDGGKGQIHQAEAVFREYGIQDKVQLVSLGKGVERISGKEKIYKGFDDTEYTLDEHNPGFLLLRQVRDSAHDHAIKGQRKKVSANRQSSIIEEIEGVGPKRRKALIMYFGGWQELSRAFVDEIAKVKGISNKLAQEIWECFH</sequence>
<proteinExistence type="inferred from homology"/>
<keyword id="KW-0963">Cytoplasm</keyword>
<keyword id="KW-0227">DNA damage</keyword>
<keyword id="KW-0228">DNA excision</keyword>
<keyword id="KW-0234">DNA repair</keyword>
<keyword id="KW-0267">Excision nuclease</keyword>
<keyword id="KW-0742">SOS response</keyword>
<evidence type="ECO:0000255" key="1">
    <source>
        <dbReference type="HAMAP-Rule" id="MF_00203"/>
    </source>
</evidence>
<organism>
    <name type="scientific">Francisella philomiragia subsp. philomiragia (strain ATCC 25017 / CCUG 19701 / FSC 153 / O#319-036)</name>
    <dbReference type="NCBI Taxonomy" id="484022"/>
    <lineage>
        <taxon>Bacteria</taxon>
        <taxon>Pseudomonadati</taxon>
        <taxon>Pseudomonadota</taxon>
        <taxon>Gammaproteobacteria</taxon>
        <taxon>Thiotrichales</taxon>
        <taxon>Francisellaceae</taxon>
        <taxon>Francisella</taxon>
    </lineage>
</organism>
<dbReference type="EMBL" id="CP000937">
    <property type="protein sequence ID" value="ABZ88091.1"/>
    <property type="molecule type" value="Genomic_DNA"/>
</dbReference>
<dbReference type="SMR" id="B0U172"/>
<dbReference type="KEGG" id="fph:Fphi_1865"/>
<dbReference type="eggNOG" id="COG0322">
    <property type="taxonomic scope" value="Bacteria"/>
</dbReference>
<dbReference type="HOGENOM" id="CLU_014841_3_0_6"/>
<dbReference type="GO" id="GO:0005737">
    <property type="term" value="C:cytoplasm"/>
    <property type="evidence" value="ECO:0007669"/>
    <property type="project" value="UniProtKB-SubCell"/>
</dbReference>
<dbReference type="GO" id="GO:0009380">
    <property type="term" value="C:excinuclease repair complex"/>
    <property type="evidence" value="ECO:0007669"/>
    <property type="project" value="InterPro"/>
</dbReference>
<dbReference type="GO" id="GO:0003677">
    <property type="term" value="F:DNA binding"/>
    <property type="evidence" value="ECO:0007669"/>
    <property type="project" value="UniProtKB-UniRule"/>
</dbReference>
<dbReference type="GO" id="GO:0009381">
    <property type="term" value="F:excinuclease ABC activity"/>
    <property type="evidence" value="ECO:0007669"/>
    <property type="project" value="UniProtKB-UniRule"/>
</dbReference>
<dbReference type="GO" id="GO:0006289">
    <property type="term" value="P:nucleotide-excision repair"/>
    <property type="evidence" value="ECO:0007669"/>
    <property type="project" value="UniProtKB-UniRule"/>
</dbReference>
<dbReference type="GO" id="GO:0009432">
    <property type="term" value="P:SOS response"/>
    <property type="evidence" value="ECO:0007669"/>
    <property type="project" value="UniProtKB-UniRule"/>
</dbReference>
<dbReference type="CDD" id="cd10434">
    <property type="entry name" value="GIY-YIG_UvrC_Cho"/>
    <property type="match status" value="1"/>
</dbReference>
<dbReference type="FunFam" id="3.30.420.340:FF:000001">
    <property type="entry name" value="UvrABC system protein C"/>
    <property type="match status" value="1"/>
</dbReference>
<dbReference type="FunFam" id="3.40.1440.10:FF:000001">
    <property type="entry name" value="UvrABC system protein C"/>
    <property type="match status" value="1"/>
</dbReference>
<dbReference type="Gene3D" id="1.10.150.20">
    <property type="entry name" value="5' to 3' exonuclease, C-terminal subdomain"/>
    <property type="match status" value="1"/>
</dbReference>
<dbReference type="Gene3D" id="3.40.1440.10">
    <property type="entry name" value="GIY-YIG endonuclease"/>
    <property type="match status" value="1"/>
</dbReference>
<dbReference type="Gene3D" id="4.10.860.10">
    <property type="entry name" value="UVR domain"/>
    <property type="match status" value="1"/>
</dbReference>
<dbReference type="Gene3D" id="3.30.420.340">
    <property type="entry name" value="UvrC, RNAse H endonuclease domain"/>
    <property type="match status" value="1"/>
</dbReference>
<dbReference type="HAMAP" id="MF_00203">
    <property type="entry name" value="UvrC"/>
    <property type="match status" value="1"/>
</dbReference>
<dbReference type="InterPro" id="IPR000305">
    <property type="entry name" value="GIY-YIG_endonuc"/>
</dbReference>
<dbReference type="InterPro" id="IPR035901">
    <property type="entry name" value="GIY-YIG_endonuc_sf"/>
</dbReference>
<dbReference type="InterPro" id="IPR047296">
    <property type="entry name" value="GIY-YIG_UvrC_Cho"/>
</dbReference>
<dbReference type="InterPro" id="IPR010994">
    <property type="entry name" value="RuvA_2-like"/>
</dbReference>
<dbReference type="InterPro" id="IPR001943">
    <property type="entry name" value="UVR_dom"/>
</dbReference>
<dbReference type="InterPro" id="IPR036876">
    <property type="entry name" value="UVR_dom_sf"/>
</dbReference>
<dbReference type="InterPro" id="IPR050066">
    <property type="entry name" value="UvrABC_protein_C"/>
</dbReference>
<dbReference type="InterPro" id="IPR004791">
    <property type="entry name" value="UvrC"/>
</dbReference>
<dbReference type="InterPro" id="IPR001162">
    <property type="entry name" value="UvrC_RNase_H_dom"/>
</dbReference>
<dbReference type="InterPro" id="IPR038476">
    <property type="entry name" value="UvrC_RNase_H_dom_sf"/>
</dbReference>
<dbReference type="NCBIfam" id="TIGR00194">
    <property type="entry name" value="uvrC"/>
    <property type="match status" value="1"/>
</dbReference>
<dbReference type="PANTHER" id="PTHR30562:SF1">
    <property type="entry name" value="UVRABC SYSTEM PROTEIN C"/>
    <property type="match status" value="1"/>
</dbReference>
<dbReference type="PANTHER" id="PTHR30562">
    <property type="entry name" value="UVRC/OXIDOREDUCTASE"/>
    <property type="match status" value="1"/>
</dbReference>
<dbReference type="Pfam" id="PF01541">
    <property type="entry name" value="GIY-YIG"/>
    <property type="match status" value="1"/>
</dbReference>
<dbReference type="Pfam" id="PF14520">
    <property type="entry name" value="HHH_5"/>
    <property type="match status" value="1"/>
</dbReference>
<dbReference type="Pfam" id="PF02151">
    <property type="entry name" value="UVR"/>
    <property type="match status" value="1"/>
</dbReference>
<dbReference type="Pfam" id="PF22920">
    <property type="entry name" value="UvrC_RNaseH"/>
    <property type="match status" value="1"/>
</dbReference>
<dbReference type="Pfam" id="PF08459">
    <property type="entry name" value="UvrC_RNaseH_dom"/>
    <property type="match status" value="1"/>
</dbReference>
<dbReference type="SMART" id="SM00465">
    <property type="entry name" value="GIYc"/>
    <property type="match status" value="1"/>
</dbReference>
<dbReference type="SUPFAM" id="SSF46600">
    <property type="entry name" value="C-terminal UvrC-binding domain of UvrB"/>
    <property type="match status" value="1"/>
</dbReference>
<dbReference type="SUPFAM" id="SSF82771">
    <property type="entry name" value="GIY-YIG endonuclease"/>
    <property type="match status" value="1"/>
</dbReference>
<dbReference type="SUPFAM" id="SSF47781">
    <property type="entry name" value="RuvA domain 2-like"/>
    <property type="match status" value="1"/>
</dbReference>
<dbReference type="PROSITE" id="PS50164">
    <property type="entry name" value="GIY_YIG"/>
    <property type="match status" value="1"/>
</dbReference>
<dbReference type="PROSITE" id="PS50151">
    <property type="entry name" value="UVR"/>
    <property type="match status" value="1"/>
</dbReference>
<dbReference type="PROSITE" id="PS50165">
    <property type="entry name" value="UVRC"/>
    <property type="match status" value="1"/>
</dbReference>
<protein>
    <recommendedName>
        <fullName evidence="1">UvrABC system protein C</fullName>
        <shortName evidence="1">Protein UvrC</shortName>
    </recommendedName>
    <alternativeName>
        <fullName evidence="1">Excinuclease ABC subunit C</fullName>
    </alternativeName>
</protein>
<gene>
    <name evidence="1" type="primary">uvrC</name>
    <name type="ordered locus">Fphi_1865</name>
</gene>